<comment type="function">
    <text>Has antibacterial activity.</text>
</comment>
<comment type="subcellular location">
    <subcellularLocation>
        <location>Secreted</location>
    </subcellularLocation>
</comment>
<comment type="similarity">
    <text evidence="2">Belongs to the cecropin family.</text>
</comment>
<organism>
    <name type="scientific">Hyphantria cunea</name>
    <name type="common">Fall webworm moth</name>
    <name type="synonym">Phalaena cunea</name>
    <dbReference type="NCBI Taxonomy" id="39466"/>
    <lineage>
        <taxon>Eukaryota</taxon>
        <taxon>Metazoa</taxon>
        <taxon>Ecdysozoa</taxon>
        <taxon>Arthropoda</taxon>
        <taxon>Hexapoda</taxon>
        <taxon>Insecta</taxon>
        <taxon>Pterygota</taxon>
        <taxon>Neoptera</taxon>
        <taxon>Endopterygota</taxon>
        <taxon>Lepidoptera</taxon>
        <taxon>Glossata</taxon>
        <taxon>Ditrysia</taxon>
        <taxon>Noctuoidea</taxon>
        <taxon>Erebidae</taxon>
        <taxon>Arctiinae</taxon>
        <taxon>Hyphantria</taxon>
    </lineage>
</organism>
<evidence type="ECO:0000255" key="1"/>
<evidence type="ECO:0000305" key="2"/>
<name>CE3E_HYPCU</name>
<reference key="1">
    <citation type="submission" date="1995-03" db="EMBL/GenBank/DDBJ databases">
        <authorList>
            <person name="Park S.-S."/>
            <person name="Shin S.W."/>
            <person name="Kim M.K."/>
            <person name="Park D.S."/>
            <person name="Oh H.W."/>
            <person name="Park H.Y."/>
        </authorList>
    </citation>
    <scope>NUCLEOTIDE SEQUENCE [MRNA]</scope>
</reference>
<sequence>MNFSRILFFVFTCFVALASVSGAPEPRWKFFKKIERVGQNVRDGLIKAGPAIQVLGAAKALGK</sequence>
<protein>
    <recommendedName>
        <fullName>Hyphancin-3E</fullName>
    </recommendedName>
    <alternativeName>
        <fullName>Cecropin-A1</fullName>
    </alternativeName>
    <alternativeName>
        <fullName>Hyphancin-IIIE</fullName>
    </alternativeName>
</protein>
<proteinExistence type="inferred from homology"/>
<feature type="signal peptide" evidence="1">
    <location>
        <begin position="1"/>
        <end position="22"/>
    </location>
</feature>
<feature type="propeptide" id="PRO_0000004867" description="Removed by a dipeptidylpeptidase" evidence="1">
    <location>
        <begin position="23"/>
        <end position="26"/>
    </location>
</feature>
<feature type="chain" id="PRO_0000004868" description="Hyphancin-3E">
    <location>
        <begin position="27"/>
        <end position="61"/>
    </location>
</feature>
<feature type="modified residue" description="Leucine amide" evidence="1">
    <location>
        <position position="61"/>
    </location>
</feature>
<dbReference type="EMBL" id="U23832">
    <property type="protein sequence ID" value="AAB39001.1"/>
    <property type="molecule type" value="mRNA"/>
</dbReference>
<dbReference type="SMR" id="P50721"/>
<dbReference type="GO" id="GO:0005576">
    <property type="term" value="C:extracellular region"/>
    <property type="evidence" value="ECO:0007669"/>
    <property type="project" value="UniProtKB-SubCell"/>
</dbReference>
<dbReference type="GO" id="GO:0019731">
    <property type="term" value="P:antibacterial humoral response"/>
    <property type="evidence" value="ECO:0007669"/>
    <property type="project" value="InterPro"/>
</dbReference>
<dbReference type="GO" id="GO:0050830">
    <property type="term" value="P:defense response to Gram-positive bacterium"/>
    <property type="evidence" value="ECO:0007669"/>
    <property type="project" value="UniProtKB-ARBA"/>
</dbReference>
<dbReference type="GO" id="GO:0045087">
    <property type="term" value="P:innate immune response"/>
    <property type="evidence" value="ECO:0007669"/>
    <property type="project" value="UniProtKB-KW"/>
</dbReference>
<dbReference type="InterPro" id="IPR000875">
    <property type="entry name" value="Cecropin"/>
</dbReference>
<dbReference type="Pfam" id="PF00272">
    <property type="entry name" value="Cecropin"/>
    <property type="match status" value="1"/>
</dbReference>
<dbReference type="PROSITE" id="PS00268">
    <property type="entry name" value="CECROPIN"/>
    <property type="match status" value="1"/>
</dbReference>
<accession>P50721</accession>
<keyword id="KW-0027">Amidation</keyword>
<keyword id="KW-0044">Antibiotic</keyword>
<keyword id="KW-0929">Antimicrobial</keyword>
<keyword id="KW-0391">Immunity</keyword>
<keyword id="KW-0399">Innate immunity</keyword>
<keyword id="KW-0964">Secreted</keyword>
<keyword id="KW-0732">Signal</keyword>